<keyword id="KW-0131">Cell cycle</keyword>
<keyword id="KW-0132">Cell division</keyword>
<keyword id="KW-0997">Cell inner membrane</keyword>
<keyword id="KW-1003">Cell membrane</keyword>
<keyword id="KW-0472">Membrane</keyword>
<keyword id="KW-1185">Reference proteome</keyword>
<keyword id="KW-0812">Transmembrane</keyword>
<keyword id="KW-1133">Transmembrane helix</keyword>
<dbReference type="EMBL" id="BX571965">
    <property type="protein sequence ID" value="CAH37034.1"/>
    <property type="molecule type" value="Genomic_DNA"/>
</dbReference>
<dbReference type="RefSeq" id="WP_004522020.1">
    <property type="nucleotide sequence ID" value="NZ_CP009538.1"/>
</dbReference>
<dbReference type="RefSeq" id="YP_109618.1">
    <property type="nucleotide sequence ID" value="NC_006350.1"/>
</dbReference>
<dbReference type="SMR" id="Q63QK0"/>
<dbReference type="STRING" id="272560.BPSL3022"/>
<dbReference type="KEGG" id="bps:BPSL3022"/>
<dbReference type="PATRIC" id="fig|272560.51.peg.2244"/>
<dbReference type="eggNOG" id="COG1589">
    <property type="taxonomic scope" value="Bacteria"/>
</dbReference>
<dbReference type="Proteomes" id="UP000000605">
    <property type="component" value="Chromosome 1"/>
</dbReference>
<dbReference type="GO" id="GO:0032153">
    <property type="term" value="C:cell division site"/>
    <property type="evidence" value="ECO:0007669"/>
    <property type="project" value="UniProtKB-UniRule"/>
</dbReference>
<dbReference type="GO" id="GO:0005886">
    <property type="term" value="C:plasma membrane"/>
    <property type="evidence" value="ECO:0007669"/>
    <property type="project" value="UniProtKB-SubCell"/>
</dbReference>
<dbReference type="GO" id="GO:0090529">
    <property type="term" value="P:cell septum assembly"/>
    <property type="evidence" value="ECO:0007669"/>
    <property type="project" value="InterPro"/>
</dbReference>
<dbReference type="GO" id="GO:0043093">
    <property type="term" value="P:FtsZ-dependent cytokinesis"/>
    <property type="evidence" value="ECO:0007669"/>
    <property type="project" value="UniProtKB-UniRule"/>
</dbReference>
<dbReference type="Gene3D" id="3.40.50.11690">
    <property type="entry name" value="Cell division protein FtsQ/DivIB"/>
    <property type="match status" value="1"/>
</dbReference>
<dbReference type="Gene3D" id="3.10.20.310">
    <property type="entry name" value="membrane protein fhac"/>
    <property type="match status" value="1"/>
</dbReference>
<dbReference type="HAMAP" id="MF_00911">
    <property type="entry name" value="FtsQ_subfam"/>
    <property type="match status" value="1"/>
</dbReference>
<dbReference type="InterPro" id="IPR005548">
    <property type="entry name" value="Cell_div_FtsQ/DivIB_C"/>
</dbReference>
<dbReference type="InterPro" id="IPR026579">
    <property type="entry name" value="FtsQ"/>
</dbReference>
<dbReference type="InterPro" id="IPR045335">
    <property type="entry name" value="FtsQ_C_sf"/>
</dbReference>
<dbReference type="InterPro" id="IPR034746">
    <property type="entry name" value="POTRA"/>
</dbReference>
<dbReference type="InterPro" id="IPR013685">
    <property type="entry name" value="POTRA_FtsQ_type"/>
</dbReference>
<dbReference type="PANTHER" id="PTHR35851">
    <property type="entry name" value="CELL DIVISION PROTEIN FTSQ"/>
    <property type="match status" value="1"/>
</dbReference>
<dbReference type="PANTHER" id="PTHR35851:SF1">
    <property type="entry name" value="CELL DIVISION PROTEIN FTSQ"/>
    <property type="match status" value="1"/>
</dbReference>
<dbReference type="Pfam" id="PF03799">
    <property type="entry name" value="FtsQ_DivIB_C"/>
    <property type="match status" value="1"/>
</dbReference>
<dbReference type="Pfam" id="PF08478">
    <property type="entry name" value="POTRA_1"/>
    <property type="match status" value="1"/>
</dbReference>
<dbReference type="PROSITE" id="PS51779">
    <property type="entry name" value="POTRA"/>
    <property type="match status" value="1"/>
</dbReference>
<comment type="function">
    <text evidence="1">Essential cell division protein. May link together the upstream cell division proteins, which are predominantly cytoplasmic, with the downstream cell division proteins, which are predominantly periplasmic. May control correct divisome assembly.</text>
</comment>
<comment type="subunit">
    <text evidence="1">Part of a complex composed of FtsB, FtsL and FtsQ.</text>
</comment>
<comment type="subcellular location">
    <subcellularLocation>
        <location evidence="1">Cell inner membrane</location>
        <topology evidence="1">Single-pass type II membrane protein</topology>
    </subcellularLocation>
    <text evidence="1">Localizes to the division septum.</text>
</comment>
<comment type="similarity">
    <text evidence="1">Belongs to the FtsQ/DivIB family. FtsQ subfamily.</text>
</comment>
<sequence>MWNNVRQLNLAASALYALLLLVLAAAGCYWLIQRPAFALREIRIDGDTEHINAPTVRAGVVGRLKGNFFTVDLDLARVAFEQMPWVRHASVRRVWPNALAVTLEEYKPLGTWGNDQLVSVDGELFTANQGELDAELPSFDGPEGSAKEVVARYRDFAKWFAPIHATPEEVTLSPRYAWTVKLSNGMQVELGRERNSDTLPDRIQRLVAAWPSVTQRWGGDIEYADLRYPNGFAIRAAGMRFLTDTDKGKK</sequence>
<gene>
    <name evidence="1" type="primary">ftsQ</name>
    <name type="ordered locus">BPSL3022</name>
</gene>
<reference key="1">
    <citation type="journal article" date="2004" name="Proc. Natl. Acad. Sci. U.S.A.">
        <title>Genomic plasticity of the causative agent of melioidosis, Burkholderia pseudomallei.</title>
        <authorList>
            <person name="Holden M.T.G."/>
            <person name="Titball R.W."/>
            <person name="Peacock S.J."/>
            <person name="Cerdeno-Tarraga A.-M."/>
            <person name="Atkins T."/>
            <person name="Crossman L.C."/>
            <person name="Pitt T."/>
            <person name="Churcher C."/>
            <person name="Mungall K.L."/>
            <person name="Bentley S.D."/>
            <person name="Sebaihia M."/>
            <person name="Thomson N.R."/>
            <person name="Bason N."/>
            <person name="Beacham I.R."/>
            <person name="Brooks K."/>
            <person name="Brown K.A."/>
            <person name="Brown N.F."/>
            <person name="Challis G.L."/>
            <person name="Cherevach I."/>
            <person name="Chillingworth T."/>
            <person name="Cronin A."/>
            <person name="Crossett B."/>
            <person name="Davis P."/>
            <person name="DeShazer D."/>
            <person name="Feltwell T."/>
            <person name="Fraser A."/>
            <person name="Hance Z."/>
            <person name="Hauser H."/>
            <person name="Holroyd S."/>
            <person name="Jagels K."/>
            <person name="Keith K.E."/>
            <person name="Maddison M."/>
            <person name="Moule S."/>
            <person name="Price C."/>
            <person name="Quail M.A."/>
            <person name="Rabbinowitsch E."/>
            <person name="Rutherford K."/>
            <person name="Sanders M."/>
            <person name="Simmonds M."/>
            <person name="Songsivilai S."/>
            <person name="Stevens K."/>
            <person name="Tumapa S."/>
            <person name="Vesaratchavest M."/>
            <person name="Whitehead S."/>
            <person name="Yeats C."/>
            <person name="Barrell B.G."/>
            <person name="Oyston P.C.F."/>
            <person name="Parkhill J."/>
        </authorList>
    </citation>
    <scope>NUCLEOTIDE SEQUENCE [LARGE SCALE GENOMIC DNA]</scope>
    <source>
        <strain>K96243</strain>
    </source>
</reference>
<feature type="chain" id="PRO_0000414662" description="Cell division protein FtsQ">
    <location>
        <begin position="1"/>
        <end position="250"/>
    </location>
</feature>
<feature type="topological domain" description="Cytoplasmic" evidence="1">
    <location>
        <begin position="1"/>
        <end position="11"/>
    </location>
</feature>
<feature type="transmembrane region" description="Helical" evidence="1">
    <location>
        <begin position="12"/>
        <end position="32"/>
    </location>
</feature>
<feature type="topological domain" description="Periplasmic" evidence="1">
    <location>
        <begin position="33"/>
        <end position="250"/>
    </location>
</feature>
<feature type="domain" description="POTRA" evidence="2">
    <location>
        <begin position="37"/>
        <end position="106"/>
    </location>
</feature>
<proteinExistence type="inferred from homology"/>
<accession>Q63QK0</accession>
<organism>
    <name type="scientific">Burkholderia pseudomallei (strain K96243)</name>
    <dbReference type="NCBI Taxonomy" id="272560"/>
    <lineage>
        <taxon>Bacteria</taxon>
        <taxon>Pseudomonadati</taxon>
        <taxon>Pseudomonadota</taxon>
        <taxon>Betaproteobacteria</taxon>
        <taxon>Burkholderiales</taxon>
        <taxon>Burkholderiaceae</taxon>
        <taxon>Burkholderia</taxon>
        <taxon>pseudomallei group</taxon>
    </lineage>
</organism>
<name>FTSQ_BURPS</name>
<evidence type="ECO:0000255" key="1">
    <source>
        <dbReference type="HAMAP-Rule" id="MF_00911"/>
    </source>
</evidence>
<evidence type="ECO:0000255" key="2">
    <source>
        <dbReference type="PROSITE-ProRule" id="PRU01115"/>
    </source>
</evidence>
<protein>
    <recommendedName>
        <fullName evidence="1">Cell division protein FtsQ</fullName>
    </recommendedName>
</protein>